<gene>
    <name evidence="1" type="primary">rpl16</name>
</gene>
<organism>
    <name type="scientific">Physcomitrium patens</name>
    <name type="common">Spreading-leaved earth moss</name>
    <name type="synonym">Physcomitrella patens</name>
    <dbReference type="NCBI Taxonomy" id="3218"/>
    <lineage>
        <taxon>Eukaryota</taxon>
        <taxon>Viridiplantae</taxon>
        <taxon>Streptophyta</taxon>
        <taxon>Embryophyta</taxon>
        <taxon>Bryophyta</taxon>
        <taxon>Bryophytina</taxon>
        <taxon>Bryopsida</taxon>
        <taxon>Funariidae</taxon>
        <taxon>Funariales</taxon>
        <taxon>Funariaceae</taxon>
        <taxon>Physcomitrium</taxon>
    </lineage>
</organism>
<name>RK16_PHYPA</name>
<proteinExistence type="inferred from homology"/>
<keyword id="KW-0150">Chloroplast</keyword>
<keyword id="KW-0934">Plastid</keyword>
<keyword id="KW-1185">Reference proteome</keyword>
<keyword id="KW-0687">Ribonucleoprotein</keyword>
<keyword id="KW-0689">Ribosomal protein</keyword>
<reference key="1">
    <citation type="journal article" date="2003" name="Nucleic Acids Res.">
        <title>Complete chloroplast DNA sequence of the moss Physcomitrella patens: evidence for the loss and relocation of rpoA from the chloroplast to the nucleus.</title>
        <authorList>
            <person name="Sugiura C."/>
            <person name="Kobayashi Y."/>
            <person name="Setsuyuki A."/>
            <person name="Sugita C."/>
            <person name="Sugita M."/>
        </authorList>
    </citation>
    <scope>NUCLEOTIDE SEQUENCE [LARGE SCALE GENOMIC DNA]</scope>
    <source>
        <strain>cv. Gransden 2004</strain>
    </source>
</reference>
<geneLocation type="chloroplast"/>
<evidence type="ECO:0000255" key="1">
    <source>
        <dbReference type="HAMAP-Rule" id="MF_01342"/>
    </source>
</evidence>
<evidence type="ECO:0000305" key="2"/>
<accession>Q6YXK9</accession>
<dbReference type="EMBL" id="AP005672">
    <property type="protein sequence ID" value="BAC85079.1"/>
    <property type="molecule type" value="Genomic_DNA"/>
</dbReference>
<dbReference type="RefSeq" id="NP_904229.1">
    <property type="nucleotide sequence ID" value="NC_005087.2"/>
</dbReference>
<dbReference type="RefSeq" id="YP_009477559.1">
    <property type="nucleotide sequence ID" value="NC_037465.1"/>
</dbReference>
<dbReference type="SMR" id="Q6YXK9"/>
<dbReference type="FunCoup" id="Q6YXK9">
    <property type="interactions" value="1283"/>
</dbReference>
<dbReference type="STRING" id="3218.Q6YXK9"/>
<dbReference type="GeneID" id="2546818"/>
<dbReference type="GeneID" id="36487193"/>
<dbReference type="KEGG" id="ppp:2546818"/>
<dbReference type="InParanoid" id="Q6YXK9"/>
<dbReference type="OrthoDB" id="34872at2759"/>
<dbReference type="Proteomes" id="UP000006727">
    <property type="component" value="Chloroplast"/>
</dbReference>
<dbReference type="GO" id="GO:0009507">
    <property type="term" value="C:chloroplast"/>
    <property type="evidence" value="ECO:0007669"/>
    <property type="project" value="UniProtKB-SubCell"/>
</dbReference>
<dbReference type="GO" id="GO:0005762">
    <property type="term" value="C:mitochondrial large ribosomal subunit"/>
    <property type="evidence" value="ECO:0000318"/>
    <property type="project" value="GO_Central"/>
</dbReference>
<dbReference type="GO" id="GO:0019843">
    <property type="term" value="F:rRNA binding"/>
    <property type="evidence" value="ECO:0000318"/>
    <property type="project" value="GO_Central"/>
</dbReference>
<dbReference type="GO" id="GO:0003735">
    <property type="term" value="F:structural constituent of ribosome"/>
    <property type="evidence" value="ECO:0000318"/>
    <property type="project" value="GO_Central"/>
</dbReference>
<dbReference type="GO" id="GO:0032543">
    <property type="term" value="P:mitochondrial translation"/>
    <property type="evidence" value="ECO:0000318"/>
    <property type="project" value="GO_Central"/>
</dbReference>
<dbReference type="CDD" id="cd01433">
    <property type="entry name" value="Ribosomal_L16_L10e"/>
    <property type="match status" value="1"/>
</dbReference>
<dbReference type="FunFam" id="3.90.1170.10:FF:000001">
    <property type="entry name" value="50S ribosomal protein L16"/>
    <property type="match status" value="1"/>
</dbReference>
<dbReference type="Gene3D" id="3.90.1170.10">
    <property type="entry name" value="Ribosomal protein L10e/L16"/>
    <property type="match status" value="1"/>
</dbReference>
<dbReference type="HAMAP" id="MF_01342">
    <property type="entry name" value="Ribosomal_uL16"/>
    <property type="match status" value="1"/>
</dbReference>
<dbReference type="InterPro" id="IPR047873">
    <property type="entry name" value="Ribosomal_uL16"/>
</dbReference>
<dbReference type="InterPro" id="IPR000114">
    <property type="entry name" value="Ribosomal_uL16_bact-type"/>
</dbReference>
<dbReference type="InterPro" id="IPR020798">
    <property type="entry name" value="Ribosomal_uL16_CS"/>
</dbReference>
<dbReference type="InterPro" id="IPR016180">
    <property type="entry name" value="Ribosomal_uL16_dom"/>
</dbReference>
<dbReference type="InterPro" id="IPR036920">
    <property type="entry name" value="Ribosomal_uL16_sf"/>
</dbReference>
<dbReference type="NCBIfam" id="TIGR01164">
    <property type="entry name" value="rplP_bact"/>
    <property type="match status" value="1"/>
</dbReference>
<dbReference type="PANTHER" id="PTHR12220">
    <property type="entry name" value="50S/60S RIBOSOMAL PROTEIN L16"/>
    <property type="match status" value="1"/>
</dbReference>
<dbReference type="PANTHER" id="PTHR12220:SF13">
    <property type="entry name" value="LARGE RIBOSOMAL SUBUNIT PROTEIN UL16M"/>
    <property type="match status" value="1"/>
</dbReference>
<dbReference type="Pfam" id="PF00252">
    <property type="entry name" value="Ribosomal_L16"/>
    <property type="match status" value="1"/>
</dbReference>
<dbReference type="PRINTS" id="PR00060">
    <property type="entry name" value="RIBOSOMALL16"/>
</dbReference>
<dbReference type="SUPFAM" id="SSF54686">
    <property type="entry name" value="Ribosomal protein L16p/L10e"/>
    <property type="match status" value="1"/>
</dbReference>
<dbReference type="PROSITE" id="PS00586">
    <property type="entry name" value="RIBOSOMAL_L16_1"/>
    <property type="match status" value="1"/>
</dbReference>
<dbReference type="PROSITE" id="PS00701">
    <property type="entry name" value="RIBOSOMAL_L16_2"/>
    <property type="match status" value="1"/>
</dbReference>
<feature type="chain" id="PRO_0000062304" description="Large ribosomal subunit protein uL16c">
    <location>
        <begin position="1"/>
        <end position="138"/>
    </location>
</feature>
<sequence>MLSPKRTKFRKQHRGRMKGIATRGNSIAFGKFALQALEPSWITSRQIEAGRRAITRYARRGGKLWIRIFPDKPITMRPAETRMGSGKGSPEYWVSVVKPGRILYEISGVPESVARAAMRIAAYKMPIRTQFITAITSV</sequence>
<protein>
    <recommendedName>
        <fullName evidence="1">Large ribosomal subunit protein uL16c</fullName>
    </recommendedName>
    <alternativeName>
        <fullName evidence="2">50S ribosomal protein L16, chloroplastic</fullName>
    </alternativeName>
</protein>
<comment type="subunit">
    <text evidence="1">Part of the 50S ribosomal subunit.</text>
</comment>
<comment type="subcellular location">
    <subcellularLocation>
        <location>Plastid</location>
        <location>Chloroplast</location>
    </subcellularLocation>
</comment>
<comment type="similarity">
    <text evidence="1">Belongs to the universal ribosomal protein uL16 family.</text>
</comment>